<protein>
    <recommendedName>
        <fullName evidence="1">Chaperone protein DnaJ</fullName>
    </recommendedName>
</protein>
<gene>
    <name evidence="1" type="primary">dnaJ</name>
    <name type="ordered locus">mma_2882</name>
</gene>
<keyword id="KW-0143">Chaperone</keyword>
<keyword id="KW-0963">Cytoplasm</keyword>
<keyword id="KW-0235">DNA replication</keyword>
<keyword id="KW-0479">Metal-binding</keyword>
<keyword id="KW-0677">Repeat</keyword>
<keyword id="KW-0346">Stress response</keyword>
<keyword id="KW-0862">Zinc</keyword>
<keyword id="KW-0863">Zinc-finger</keyword>
<dbReference type="EMBL" id="CP000269">
    <property type="protein sequence ID" value="ABR88968.1"/>
    <property type="molecule type" value="Genomic_DNA"/>
</dbReference>
<dbReference type="RefSeq" id="WP_012080731.1">
    <property type="nucleotide sequence ID" value="NC_009659.1"/>
</dbReference>
<dbReference type="SMR" id="A6T225"/>
<dbReference type="STRING" id="375286.mma_2882"/>
<dbReference type="KEGG" id="mms:mma_2882"/>
<dbReference type="eggNOG" id="COG0484">
    <property type="taxonomic scope" value="Bacteria"/>
</dbReference>
<dbReference type="HOGENOM" id="CLU_017633_0_7_4"/>
<dbReference type="OrthoDB" id="9779889at2"/>
<dbReference type="Proteomes" id="UP000006388">
    <property type="component" value="Chromosome"/>
</dbReference>
<dbReference type="GO" id="GO:0005737">
    <property type="term" value="C:cytoplasm"/>
    <property type="evidence" value="ECO:0007669"/>
    <property type="project" value="UniProtKB-SubCell"/>
</dbReference>
<dbReference type="GO" id="GO:0005524">
    <property type="term" value="F:ATP binding"/>
    <property type="evidence" value="ECO:0007669"/>
    <property type="project" value="InterPro"/>
</dbReference>
<dbReference type="GO" id="GO:0031072">
    <property type="term" value="F:heat shock protein binding"/>
    <property type="evidence" value="ECO:0007669"/>
    <property type="project" value="InterPro"/>
</dbReference>
<dbReference type="GO" id="GO:0051082">
    <property type="term" value="F:unfolded protein binding"/>
    <property type="evidence" value="ECO:0007669"/>
    <property type="project" value="UniProtKB-UniRule"/>
</dbReference>
<dbReference type="GO" id="GO:0008270">
    <property type="term" value="F:zinc ion binding"/>
    <property type="evidence" value="ECO:0007669"/>
    <property type="project" value="UniProtKB-UniRule"/>
</dbReference>
<dbReference type="GO" id="GO:0051085">
    <property type="term" value="P:chaperone cofactor-dependent protein refolding"/>
    <property type="evidence" value="ECO:0007669"/>
    <property type="project" value="TreeGrafter"/>
</dbReference>
<dbReference type="GO" id="GO:0006260">
    <property type="term" value="P:DNA replication"/>
    <property type="evidence" value="ECO:0007669"/>
    <property type="project" value="UniProtKB-KW"/>
</dbReference>
<dbReference type="GO" id="GO:0042026">
    <property type="term" value="P:protein refolding"/>
    <property type="evidence" value="ECO:0007669"/>
    <property type="project" value="TreeGrafter"/>
</dbReference>
<dbReference type="GO" id="GO:0009408">
    <property type="term" value="P:response to heat"/>
    <property type="evidence" value="ECO:0007669"/>
    <property type="project" value="InterPro"/>
</dbReference>
<dbReference type="CDD" id="cd06257">
    <property type="entry name" value="DnaJ"/>
    <property type="match status" value="1"/>
</dbReference>
<dbReference type="CDD" id="cd10747">
    <property type="entry name" value="DnaJ_C"/>
    <property type="match status" value="1"/>
</dbReference>
<dbReference type="CDD" id="cd10719">
    <property type="entry name" value="DnaJ_zf"/>
    <property type="match status" value="1"/>
</dbReference>
<dbReference type="FunFam" id="1.10.287.110:FF:000034">
    <property type="entry name" value="Chaperone protein DnaJ"/>
    <property type="match status" value="1"/>
</dbReference>
<dbReference type="FunFam" id="2.10.230.10:FF:000002">
    <property type="entry name" value="Molecular chaperone DnaJ"/>
    <property type="match status" value="1"/>
</dbReference>
<dbReference type="FunFam" id="2.60.260.20:FF:000004">
    <property type="entry name" value="Molecular chaperone DnaJ"/>
    <property type="match status" value="1"/>
</dbReference>
<dbReference type="Gene3D" id="1.10.287.110">
    <property type="entry name" value="DnaJ domain"/>
    <property type="match status" value="1"/>
</dbReference>
<dbReference type="Gene3D" id="2.10.230.10">
    <property type="entry name" value="Heat shock protein DnaJ, cysteine-rich domain"/>
    <property type="match status" value="1"/>
</dbReference>
<dbReference type="Gene3D" id="2.60.260.20">
    <property type="entry name" value="Urease metallochaperone UreE, N-terminal domain"/>
    <property type="match status" value="2"/>
</dbReference>
<dbReference type="HAMAP" id="MF_01152">
    <property type="entry name" value="DnaJ"/>
    <property type="match status" value="1"/>
</dbReference>
<dbReference type="InterPro" id="IPR012724">
    <property type="entry name" value="DnaJ"/>
</dbReference>
<dbReference type="InterPro" id="IPR002939">
    <property type="entry name" value="DnaJ_C"/>
</dbReference>
<dbReference type="InterPro" id="IPR001623">
    <property type="entry name" value="DnaJ_domain"/>
</dbReference>
<dbReference type="InterPro" id="IPR018253">
    <property type="entry name" value="DnaJ_domain_CS"/>
</dbReference>
<dbReference type="InterPro" id="IPR008971">
    <property type="entry name" value="HSP40/DnaJ_pept-bd"/>
</dbReference>
<dbReference type="InterPro" id="IPR001305">
    <property type="entry name" value="HSP_DnaJ_Cys-rich_dom"/>
</dbReference>
<dbReference type="InterPro" id="IPR036410">
    <property type="entry name" value="HSP_DnaJ_Cys-rich_dom_sf"/>
</dbReference>
<dbReference type="InterPro" id="IPR036869">
    <property type="entry name" value="J_dom_sf"/>
</dbReference>
<dbReference type="NCBIfam" id="TIGR02349">
    <property type="entry name" value="DnaJ_bact"/>
    <property type="match status" value="1"/>
</dbReference>
<dbReference type="NCBIfam" id="NF008035">
    <property type="entry name" value="PRK10767.1"/>
    <property type="match status" value="1"/>
</dbReference>
<dbReference type="PANTHER" id="PTHR43096:SF48">
    <property type="entry name" value="CHAPERONE PROTEIN DNAJ"/>
    <property type="match status" value="1"/>
</dbReference>
<dbReference type="PANTHER" id="PTHR43096">
    <property type="entry name" value="DNAJ HOMOLOG 1, MITOCHONDRIAL-RELATED"/>
    <property type="match status" value="1"/>
</dbReference>
<dbReference type="Pfam" id="PF00226">
    <property type="entry name" value="DnaJ"/>
    <property type="match status" value="1"/>
</dbReference>
<dbReference type="Pfam" id="PF01556">
    <property type="entry name" value="DnaJ_C"/>
    <property type="match status" value="1"/>
</dbReference>
<dbReference type="Pfam" id="PF00684">
    <property type="entry name" value="DnaJ_CXXCXGXG"/>
    <property type="match status" value="1"/>
</dbReference>
<dbReference type="PRINTS" id="PR00625">
    <property type="entry name" value="JDOMAIN"/>
</dbReference>
<dbReference type="SMART" id="SM00271">
    <property type="entry name" value="DnaJ"/>
    <property type="match status" value="1"/>
</dbReference>
<dbReference type="SUPFAM" id="SSF46565">
    <property type="entry name" value="Chaperone J-domain"/>
    <property type="match status" value="1"/>
</dbReference>
<dbReference type="SUPFAM" id="SSF57938">
    <property type="entry name" value="DnaJ/Hsp40 cysteine-rich domain"/>
    <property type="match status" value="1"/>
</dbReference>
<dbReference type="SUPFAM" id="SSF49493">
    <property type="entry name" value="HSP40/DnaJ peptide-binding domain"/>
    <property type="match status" value="2"/>
</dbReference>
<dbReference type="PROSITE" id="PS00636">
    <property type="entry name" value="DNAJ_1"/>
    <property type="match status" value="1"/>
</dbReference>
<dbReference type="PROSITE" id="PS50076">
    <property type="entry name" value="DNAJ_2"/>
    <property type="match status" value="1"/>
</dbReference>
<dbReference type="PROSITE" id="PS51188">
    <property type="entry name" value="ZF_CR"/>
    <property type="match status" value="1"/>
</dbReference>
<proteinExistence type="inferred from homology"/>
<organism>
    <name type="scientific">Janthinobacterium sp. (strain Marseille)</name>
    <name type="common">Minibacterium massiliensis</name>
    <dbReference type="NCBI Taxonomy" id="375286"/>
    <lineage>
        <taxon>Bacteria</taxon>
        <taxon>Pseudomonadati</taxon>
        <taxon>Pseudomonadota</taxon>
        <taxon>Betaproteobacteria</taxon>
        <taxon>Burkholderiales</taxon>
        <taxon>Oxalobacteraceae</taxon>
        <taxon>Janthinobacterium</taxon>
    </lineage>
</organism>
<sequence>MAKRDFYEILGVGKSASDEEIKKAYRKLAMKHHPDRNPDSKGAEDKFKEAKEAYEMLSDPQKRDAYDRYGHAGVDPNMGGGGGGGGFADAFGDIFGDIFGQAGGGRGGRGGPQVYRGADLRYNLEITLEQAAHGYDTTIRVPSWDNCETCDGSGAKPGTSPVNCTTCGGHGQVRMQQGFFSVLQTCPKCHGSGKINPSPCGTCSGAGKIKRNKTLEVKIPSGIDDGMRIRSSGNGEPGMNGGPPGDLYVEIRIKQHPMFQRDGDDLHCEIPISFAKAALGGEIEVPTLNGKASFTIPEGTQSGKTFRLRSKGIKGVRSGYAGDLFCHVIVETPVTLTERQKELMREFEQLTIEGGSKHSPQTKSWKDKVKEFFE</sequence>
<evidence type="ECO:0000255" key="1">
    <source>
        <dbReference type="HAMAP-Rule" id="MF_01152"/>
    </source>
</evidence>
<evidence type="ECO:0000256" key="2">
    <source>
        <dbReference type="SAM" id="MobiDB-lite"/>
    </source>
</evidence>
<feature type="chain" id="PRO_1000085210" description="Chaperone protein DnaJ">
    <location>
        <begin position="1"/>
        <end position="374"/>
    </location>
</feature>
<feature type="domain" description="J" evidence="1">
    <location>
        <begin position="5"/>
        <end position="70"/>
    </location>
</feature>
<feature type="repeat" description="CXXCXGXG motif">
    <location>
        <begin position="147"/>
        <end position="154"/>
    </location>
</feature>
<feature type="repeat" description="CXXCXGXG motif">
    <location>
        <begin position="164"/>
        <end position="171"/>
    </location>
</feature>
<feature type="repeat" description="CXXCXGXG motif">
    <location>
        <begin position="186"/>
        <end position="193"/>
    </location>
</feature>
<feature type="repeat" description="CXXCXGXG motif">
    <location>
        <begin position="200"/>
        <end position="207"/>
    </location>
</feature>
<feature type="zinc finger region" description="CR-type" evidence="1">
    <location>
        <begin position="134"/>
        <end position="212"/>
    </location>
</feature>
<feature type="region of interest" description="Disordered" evidence="2">
    <location>
        <begin position="29"/>
        <end position="50"/>
    </location>
</feature>
<feature type="compositionally biased region" description="Basic and acidic residues" evidence="2">
    <location>
        <begin position="35"/>
        <end position="50"/>
    </location>
</feature>
<feature type="binding site" evidence="1">
    <location>
        <position position="147"/>
    </location>
    <ligand>
        <name>Zn(2+)</name>
        <dbReference type="ChEBI" id="CHEBI:29105"/>
        <label>1</label>
    </ligand>
</feature>
<feature type="binding site" evidence="1">
    <location>
        <position position="150"/>
    </location>
    <ligand>
        <name>Zn(2+)</name>
        <dbReference type="ChEBI" id="CHEBI:29105"/>
        <label>1</label>
    </ligand>
</feature>
<feature type="binding site" evidence="1">
    <location>
        <position position="164"/>
    </location>
    <ligand>
        <name>Zn(2+)</name>
        <dbReference type="ChEBI" id="CHEBI:29105"/>
        <label>2</label>
    </ligand>
</feature>
<feature type="binding site" evidence="1">
    <location>
        <position position="167"/>
    </location>
    <ligand>
        <name>Zn(2+)</name>
        <dbReference type="ChEBI" id="CHEBI:29105"/>
        <label>2</label>
    </ligand>
</feature>
<feature type="binding site" evidence="1">
    <location>
        <position position="186"/>
    </location>
    <ligand>
        <name>Zn(2+)</name>
        <dbReference type="ChEBI" id="CHEBI:29105"/>
        <label>2</label>
    </ligand>
</feature>
<feature type="binding site" evidence="1">
    <location>
        <position position="189"/>
    </location>
    <ligand>
        <name>Zn(2+)</name>
        <dbReference type="ChEBI" id="CHEBI:29105"/>
        <label>2</label>
    </ligand>
</feature>
<feature type="binding site" evidence="1">
    <location>
        <position position="200"/>
    </location>
    <ligand>
        <name>Zn(2+)</name>
        <dbReference type="ChEBI" id="CHEBI:29105"/>
        <label>1</label>
    </ligand>
</feature>
<feature type="binding site" evidence="1">
    <location>
        <position position="203"/>
    </location>
    <ligand>
        <name>Zn(2+)</name>
        <dbReference type="ChEBI" id="CHEBI:29105"/>
        <label>1</label>
    </ligand>
</feature>
<accession>A6T225</accession>
<reference key="1">
    <citation type="journal article" date="2007" name="PLoS Genet.">
        <title>Genome analysis of Minibacterium massiliensis highlights the convergent evolution of water-living bacteria.</title>
        <authorList>
            <person name="Audic S."/>
            <person name="Robert C."/>
            <person name="Campagna B."/>
            <person name="Parinello H."/>
            <person name="Claverie J.-M."/>
            <person name="Raoult D."/>
            <person name="Drancourt M."/>
        </authorList>
    </citation>
    <scope>NUCLEOTIDE SEQUENCE [LARGE SCALE GENOMIC DNA]</scope>
    <source>
        <strain>Marseille</strain>
    </source>
</reference>
<comment type="function">
    <text evidence="1">Participates actively in the response to hyperosmotic and heat shock by preventing the aggregation of stress-denatured proteins and by disaggregating proteins, also in an autonomous, DnaK-independent fashion. Unfolded proteins bind initially to DnaJ; upon interaction with the DnaJ-bound protein, DnaK hydrolyzes its bound ATP, resulting in the formation of a stable complex. GrpE releases ADP from DnaK; ATP binding to DnaK triggers the release of the substrate protein, thus completing the reaction cycle. Several rounds of ATP-dependent interactions between DnaJ, DnaK and GrpE are required for fully efficient folding. Also involved, together with DnaK and GrpE, in the DNA replication of plasmids through activation of initiation proteins.</text>
</comment>
<comment type="cofactor">
    <cofactor evidence="1">
        <name>Zn(2+)</name>
        <dbReference type="ChEBI" id="CHEBI:29105"/>
    </cofactor>
    <text evidence="1">Binds 2 Zn(2+) ions per monomer.</text>
</comment>
<comment type="subunit">
    <text evidence="1">Homodimer.</text>
</comment>
<comment type="subcellular location">
    <subcellularLocation>
        <location evidence="1">Cytoplasm</location>
    </subcellularLocation>
</comment>
<comment type="domain">
    <text evidence="1">The J domain is necessary and sufficient to stimulate DnaK ATPase activity. Zinc center 1 plays an important role in the autonomous, DnaK-independent chaperone activity of DnaJ. Zinc center 2 is essential for interaction with DnaK and for DnaJ activity.</text>
</comment>
<comment type="similarity">
    <text evidence="1">Belongs to the DnaJ family.</text>
</comment>
<name>DNAJ_JANMA</name>